<protein>
    <recommendedName>
        <fullName evidence="1">Cytosolic Fe-S cluster assembly factor CFD1</fullName>
    </recommendedName>
    <alternativeName>
        <fullName evidence="1">Cytosolic Fe-S cluster-deficient protein 1</fullName>
    </alternativeName>
    <alternativeName>
        <fullName>Ribosomal export protein 19</fullName>
    </alternativeName>
</protein>
<name>CFD1_YEAST</name>
<sequence length="293" mass="31922">MEEQEIGVPAASLAGIKHIILILSGKGGVGKSSVTTQTALTLCSMGFKVGVLDIDLTGPSLPRMFGLENESIYQGPEGWQPVKVETNSTGSLSVISLGFLLGDRGNSVIWRGPKKTSMIKQFISDVAWGELDYLLIDTPPGTSDEHISIAEELRYSKPDGGIVVTTPQSVATADVKKEINFCKKVDLKILGIIENMSGFVCPHCAECTNIFSSGGGKRLSEQFSVPYLGNVPIDPKFVEMIENQVSSKKTLVEMYRESSLCPIFEEIMKKLRKQDTTTPVVDKHEQPQIESPK</sequence>
<dbReference type="EMBL" id="X79743">
    <property type="status" value="NOT_ANNOTATED_CDS"/>
    <property type="molecule type" value="Genomic_DNA"/>
</dbReference>
<dbReference type="EMBL" id="Z38113">
    <property type="protein sequence ID" value="CAA86248.1"/>
    <property type="molecule type" value="Genomic_DNA"/>
</dbReference>
<dbReference type="EMBL" id="Z38062">
    <property type="protein sequence ID" value="CAA86200.1"/>
    <property type="molecule type" value="Genomic_DNA"/>
</dbReference>
<dbReference type="EMBL" id="AY558297">
    <property type="protein sequence ID" value="AAS56623.1"/>
    <property type="molecule type" value="Genomic_DNA"/>
</dbReference>
<dbReference type="EMBL" id="BK006942">
    <property type="protein sequence ID" value="DAA08543.1"/>
    <property type="molecule type" value="Genomic_DNA"/>
</dbReference>
<dbReference type="PIR" id="S58704">
    <property type="entry name" value="S58704"/>
</dbReference>
<dbReference type="RefSeq" id="NP_012263.1">
    <property type="nucleotide sequence ID" value="NM_001179353.1"/>
</dbReference>
<dbReference type="SMR" id="P40558"/>
<dbReference type="BioGRID" id="34989">
    <property type="interactions" value="256"/>
</dbReference>
<dbReference type="ComplexPortal" id="CPX-385">
    <property type="entry name" value="CFD1-NBP35 Fe-S cluster assembly complex"/>
</dbReference>
<dbReference type="FunCoup" id="P40558">
    <property type="interactions" value="220"/>
</dbReference>
<dbReference type="IntAct" id="P40558">
    <property type="interactions" value="3"/>
</dbReference>
<dbReference type="STRING" id="4932.YIL003W"/>
<dbReference type="iPTMnet" id="P40558"/>
<dbReference type="PaxDb" id="4932-YIL003W"/>
<dbReference type="PeptideAtlas" id="P40558"/>
<dbReference type="EnsemblFungi" id="YIL003W_mRNA">
    <property type="protein sequence ID" value="YIL003W"/>
    <property type="gene ID" value="YIL003W"/>
</dbReference>
<dbReference type="GeneID" id="854814"/>
<dbReference type="KEGG" id="sce:YIL003W"/>
<dbReference type="AGR" id="SGD:S000001265"/>
<dbReference type="SGD" id="S000001265">
    <property type="gene designation" value="CFD1"/>
</dbReference>
<dbReference type="VEuPathDB" id="FungiDB:YIL003W"/>
<dbReference type="eggNOG" id="KOG3022">
    <property type="taxonomic scope" value="Eukaryota"/>
</dbReference>
<dbReference type="GeneTree" id="ENSGT00950000183193"/>
<dbReference type="HOGENOM" id="CLU_024839_0_1_1"/>
<dbReference type="InParanoid" id="P40558"/>
<dbReference type="OMA" id="WIPVFAD"/>
<dbReference type="OrthoDB" id="3900342at2759"/>
<dbReference type="BioCyc" id="YEAST:G3O-31282-MONOMER"/>
<dbReference type="BioGRID-ORCS" id="854814">
    <property type="hits" value="2 hits in 10 CRISPR screens"/>
</dbReference>
<dbReference type="PRO" id="PR:P40558"/>
<dbReference type="Proteomes" id="UP000002311">
    <property type="component" value="Chromosome IX"/>
</dbReference>
<dbReference type="RNAct" id="P40558">
    <property type="molecule type" value="protein"/>
</dbReference>
<dbReference type="GO" id="GO:0005737">
    <property type="term" value="C:cytoplasm"/>
    <property type="evidence" value="ECO:0000314"/>
    <property type="project" value="SGD"/>
</dbReference>
<dbReference type="GO" id="GO:0005829">
    <property type="term" value="C:cytosol"/>
    <property type="evidence" value="ECO:0000314"/>
    <property type="project" value="ComplexPortal"/>
</dbReference>
<dbReference type="GO" id="GO:1904564">
    <property type="term" value="C:cytosolic [4Fe-4S] assembly scaffold complex"/>
    <property type="evidence" value="ECO:0000314"/>
    <property type="project" value="ComplexPortal"/>
</dbReference>
<dbReference type="GO" id="GO:1990229">
    <property type="term" value="C:iron-sulfur cluster assembly complex"/>
    <property type="evidence" value="ECO:0000314"/>
    <property type="project" value="ComplexPortal"/>
</dbReference>
<dbReference type="GO" id="GO:0051539">
    <property type="term" value="F:4 iron, 4 sulfur cluster binding"/>
    <property type="evidence" value="ECO:0000314"/>
    <property type="project" value="SGD"/>
</dbReference>
<dbReference type="GO" id="GO:0005524">
    <property type="term" value="F:ATP binding"/>
    <property type="evidence" value="ECO:0007669"/>
    <property type="project" value="UniProtKB-KW"/>
</dbReference>
<dbReference type="GO" id="GO:0140663">
    <property type="term" value="F:ATP-dependent FeS chaperone activity"/>
    <property type="evidence" value="ECO:0007669"/>
    <property type="project" value="InterPro"/>
</dbReference>
<dbReference type="GO" id="GO:0051536">
    <property type="term" value="F:iron-sulfur cluster binding"/>
    <property type="evidence" value="ECO:0000318"/>
    <property type="project" value="GO_Central"/>
</dbReference>
<dbReference type="GO" id="GO:0046872">
    <property type="term" value="F:metal ion binding"/>
    <property type="evidence" value="ECO:0007669"/>
    <property type="project" value="UniProtKB-KW"/>
</dbReference>
<dbReference type="GO" id="GO:0016226">
    <property type="term" value="P:iron-sulfur cluster assembly"/>
    <property type="evidence" value="ECO:0000314"/>
    <property type="project" value="ComplexPortal"/>
</dbReference>
<dbReference type="GO" id="GO:0002098">
    <property type="term" value="P:tRNA wobble uridine modification"/>
    <property type="evidence" value="ECO:0000315"/>
    <property type="project" value="SGD"/>
</dbReference>
<dbReference type="CDD" id="cd02037">
    <property type="entry name" value="Mrp_NBP35"/>
    <property type="match status" value="1"/>
</dbReference>
<dbReference type="FunFam" id="3.40.50.300:FF:001300">
    <property type="entry name" value="Cytosolic Fe-S cluster assembly factor CFD1"/>
    <property type="match status" value="1"/>
</dbReference>
<dbReference type="Gene3D" id="3.40.50.300">
    <property type="entry name" value="P-loop containing nucleotide triphosphate hydrolases"/>
    <property type="match status" value="1"/>
</dbReference>
<dbReference type="HAMAP" id="MF_02040">
    <property type="entry name" value="Mrp_NBP35"/>
    <property type="match status" value="1"/>
</dbReference>
<dbReference type="HAMAP" id="MF_03039">
    <property type="entry name" value="NUBP2"/>
    <property type="match status" value="1"/>
</dbReference>
<dbReference type="InterPro" id="IPR000808">
    <property type="entry name" value="Mrp-like_CS"/>
</dbReference>
<dbReference type="InterPro" id="IPR019591">
    <property type="entry name" value="Mrp/NBP35_ATP-bd"/>
</dbReference>
<dbReference type="InterPro" id="IPR028600">
    <property type="entry name" value="NUBP2/Cfd1_eukaryotes"/>
</dbReference>
<dbReference type="InterPro" id="IPR027417">
    <property type="entry name" value="P-loop_NTPase"/>
</dbReference>
<dbReference type="InterPro" id="IPR033756">
    <property type="entry name" value="YlxH/NBP35"/>
</dbReference>
<dbReference type="PANTHER" id="PTHR23264:SF19">
    <property type="entry name" value="CYTOSOLIC FE-S CLUSTER ASSEMBLY FACTOR NUBP2"/>
    <property type="match status" value="1"/>
</dbReference>
<dbReference type="PANTHER" id="PTHR23264">
    <property type="entry name" value="NUCLEOTIDE-BINDING PROTEIN NBP35 YEAST -RELATED"/>
    <property type="match status" value="1"/>
</dbReference>
<dbReference type="Pfam" id="PF10609">
    <property type="entry name" value="ParA"/>
    <property type="match status" value="1"/>
</dbReference>
<dbReference type="SUPFAM" id="SSF52540">
    <property type="entry name" value="P-loop containing nucleoside triphosphate hydrolases"/>
    <property type="match status" value="1"/>
</dbReference>
<dbReference type="PROSITE" id="PS01215">
    <property type="entry name" value="MRP"/>
    <property type="match status" value="1"/>
</dbReference>
<evidence type="ECO:0000255" key="1">
    <source>
        <dbReference type="HAMAP-Rule" id="MF_03039"/>
    </source>
</evidence>
<evidence type="ECO:0000269" key="2">
    <source>
    </source>
</evidence>
<evidence type="ECO:0000269" key="3">
    <source>
    </source>
</evidence>
<evidence type="ECO:0000269" key="4">
    <source>
    </source>
</evidence>
<evidence type="ECO:0000269" key="5">
    <source>
    </source>
</evidence>
<evidence type="ECO:0000269" key="6">
    <source>
    </source>
</evidence>
<evidence type="ECO:0007744" key="7">
    <source>
    </source>
</evidence>
<evidence type="ECO:0007744" key="8">
    <source>
    </source>
</evidence>
<organism>
    <name type="scientific">Saccharomyces cerevisiae (strain ATCC 204508 / S288c)</name>
    <name type="common">Baker's yeast</name>
    <dbReference type="NCBI Taxonomy" id="559292"/>
    <lineage>
        <taxon>Eukaryota</taxon>
        <taxon>Fungi</taxon>
        <taxon>Dikarya</taxon>
        <taxon>Ascomycota</taxon>
        <taxon>Saccharomycotina</taxon>
        <taxon>Saccharomycetes</taxon>
        <taxon>Saccharomycetales</taxon>
        <taxon>Saccharomycetaceae</taxon>
        <taxon>Saccharomyces</taxon>
    </lineage>
</organism>
<gene>
    <name evidence="1" type="primary">CFD1</name>
    <name type="synonym">DRE3</name>
    <name type="synonym">RIX19</name>
    <name type="ordered locus">YIL003W</name>
    <name type="ORF">YIA3W</name>
</gene>
<feature type="chain" id="PRO_0000184952" description="Cytosolic Fe-S cluster assembly factor CFD1">
    <location>
        <begin position="1"/>
        <end position="293"/>
    </location>
</feature>
<feature type="binding site" evidence="1">
    <location>
        <begin position="25"/>
        <end position="32"/>
    </location>
    <ligand>
        <name>ATP</name>
        <dbReference type="ChEBI" id="CHEBI:30616"/>
    </ligand>
</feature>
<feature type="binding site">
    <location>
        <position position="201"/>
    </location>
    <ligand>
        <name>[4Fe-4S] cluster</name>
        <dbReference type="ChEBI" id="CHEBI:49883"/>
        <note>ligand shared between dimeric partners</note>
    </ligand>
</feature>
<feature type="binding site">
    <location>
        <position position="204"/>
    </location>
    <ligand>
        <name>[4Fe-4S] cluster</name>
        <dbReference type="ChEBI" id="CHEBI:49883"/>
        <note>ligand shared between dimeric partners</note>
    </ligand>
</feature>
<feature type="modified residue" description="Phosphoserine" evidence="7 8">
    <location>
        <position position="291"/>
    </location>
</feature>
<feature type="mutagenesis site" description="Loss of function.">
    <original>K</original>
    <variation>A</variation>
    <location>
        <position position="31"/>
    </location>
</feature>
<feature type="mutagenesis site" description="Loss of function.">
    <original>T</original>
    <variation>A</variation>
    <location>
        <position position="86"/>
    </location>
</feature>
<feature type="mutagenesis site" description="Does not impair function." evidence="5">
    <original>C</original>
    <variation>A</variation>
    <location>
        <position position="182"/>
    </location>
</feature>
<feature type="mutagenesis site" description="Loss of function and disrupts heterotetramer formation." evidence="5">
    <original>C</original>
    <variation>A</variation>
    <location>
        <position position="201"/>
    </location>
</feature>
<feature type="mutagenesis site" description="Loss of function and disrupts heterotetramer formation." evidence="5">
    <original>C</original>
    <variation>A</variation>
    <location>
        <position position="204"/>
    </location>
</feature>
<feature type="mutagenesis site" description="Does not impair function." evidence="5">
    <original>C</original>
    <variation>A</variation>
    <location>
        <position position="207"/>
    </location>
</feature>
<comment type="function">
    <text evidence="1 2 3 4 5 6">Component of the cytosolic iron-sulfur (Fe/S) protein assembly (CIA) machinery (PubMed:12970194, PubMed:15660135, PubMed:17401378). Required for maturation of extramitochondrial Fe-S proteins (PubMed:12970194, PubMed:15660135, PubMed:17401378, PubMed:22362766, PubMed:31040179). The NBP35-CFD1 heterotetramer forms a Fe-S scaffold complex, mediating the de novo assembly of an Fe-S cluster and its transfer to target apoproteins (PubMed:17401378, PubMed:22362766). Nucleotide binding/hydrolysis seems to be critcal for loading of Fe-S clusters onto CFD1 and NBP35 (PubMed:22362766). Required for biogenesis and export of both ribosomal subunits, which may reflect a role in assembly of the Fe/S clusters in RLI1, a protein which performs rRNA processing and ribosome export (PubMed:15660135).</text>
</comment>
<comment type="cofactor">
    <cofactor>
        <name>[4Fe-4S] cluster</name>
        <dbReference type="ChEBI" id="CHEBI:49883"/>
    </cofactor>
    <text>Binds 4 [4Fe-4S] clusters per heterotetramer. Contains two stable clusters in the N-termini of NBP35 and two labile, bridging clusters between subunits of the NBP35-CFD1 heterotetramer.</text>
</comment>
<comment type="subunit">
    <text evidence="1 5">Heterotetramer of 2 NBP35 and 2 CFD1 chains.</text>
</comment>
<comment type="interaction">
    <interactant intactId="EBI-24924">
        <id>P40558</id>
    </interactant>
    <interactant intactId="EBI-11880">
        <id>P52920</id>
        <label>NBP35</label>
    </interactant>
    <organismsDiffer>false</organismsDiffer>
    <experiments>11</experiments>
</comment>
<comment type="subcellular location">
    <subcellularLocation>
        <location evidence="1 2">Cytoplasm</location>
    </subcellularLocation>
</comment>
<comment type="disruption phenotype">
    <text evidence="2 6">Inviable (PubMed:12970194). Decreases cytosolic iron-sulfur (Fe-S) protein assembly (PubMed:31040179).</text>
</comment>
<comment type="similarity">
    <text evidence="1">Belongs to the Mrp/NBP35 ATP-binding proteins family. NUBP2/CFD1 subfamily.</text>
</comment>
<accession>P40558</accession>
<accession>D6VVS7</accession>
<keyword id="KW-0004">4Fe-4S</keyword>
<keyword id="KW-0067">ATP-binding</keyword>
<keyword id="KW-0963">Cytoplasm</keyword>
<keyword id="KW-0408">Iron</keyword>
<keyword id="KW-0411">Iron-sulfur</keyword>
<keyword id="KW-0479">Metal-binding</keyword>
<keyword id="KW-0547">Nucleotide-binding</keyword>
<keyword id="KW-0597">Phosphoprotein</keyword>
<keyword id="KW-1185">Reference proteome</keyword>
<proteinExistence type="evidence at protein level"/>
<reference key="1">
    <citation type="journal article" date="1995" name="Yeast">
        <title>Nucleotide sequence and analysis of the centromeric region of yeast chromosome IX.</title>
        <authorList>
            <person name="Voss H."/>
            <person name="Tamames J."/>
            <person name="Teodoru C."/>
            <person name="Valencia A."/>
            <person name="Sensen C."/>
            <person name="Wiemann S."/>
            <person name="Schwager C."/>
            <person name="Zimmermann J."/>
            <person name="Sander C."/>
            <person name="Ansorge W."/>
        </authorList>
    </citation>
    <scope>NUCLEOTIDE SEQUENCE [GENOMIC DNA]</scope>
    <source>
        <strain>ATCC 204508 / S288c</strain>
    </source>
</reference>
<reference key="2">
    <citation type="journal article" date="1997" name="Nature">
        <title>The nucleotide sequence of Saccharomyces cerevisiae chromosome IX.</title>
        <authorList>
            <person name="Churcher C.M."/>
            <person name="Bowman S."/>
            <person name="Badcock K."/>
            <person name="Bankier A.T."/>
            <person name="Brown D."/>
            <person name="Chillingworth T."/>
            <person name="Connor R."/>
            <person name="Devlin K."/>
            <person name="Gentles S."/>
            <person name="Hamlin N."/>
            <person name="Harris D.E."/>
            <person name="Horsnell T."/>
            <person name="Hunt S."/>
            <person name="Jagels K."/>
            <person name="Jones M."/>
            <person name="Lye G."/>
            <person name="Moule S."/>
            <person name="Odell C."/>
            <person name="Pearson D."/>
            <person name="Rajandream M.A."/>
            <person name="Rice P."/>
            <person name="Rowley N."/>
            <person name="Skelton J."/>
            <person name="Smith V."/>
            <person name="Walsh S.V."/>
            <person name="Whitehead S."/>
            <person name="Barrell B.G."/>
        </authorList>
    </citation>
    <scope>NUCLEOTIDE SEQUENCE [LARGE SCALE GENOMIC DNA]</scope>
    <source>
        <strain>ATCC 204508 / S288c</strain>
    </source>
</reference>
<reference key="3">
    <citation type="journal article" date="2014" name="G3 (Bethesda)">
        <title>The reference genome sequence of Saccharomyces cerevisiae: Then and now.</title>
        <authorList>
            <person name="Engel S.R."/>
            <person name="Dietrich F.S."/>
            <person name="Fisk D.G."/>
            <person name="Binkley G."/>
            <person name="Balakrishnan R."/>
            <person name="Costanzo M.C."/>
            <person name="Dwight S.S."/>
            <person name="Hitz B.C."/>
            <person name="Karra K."/>
            <person name="Nash R.S."/>
            <person name="Weng S."/>
            <person name="Wong E.D."/>
            <person name="Lloyd P."/>
            <person name="Skrzypek M.S."/>
            <person name="Miyasato S.R."/>
            <person name="Simison M."/>
            <person name="Cherry J.M."/>
        </authorList>
    </citation>
    <scope>GENOME REANNOTATION</scope>
    <source>
        <strain>ATCC 204508 / S288c</strain>
    </source>
</reference>
<reference key="4">
    <citation type="journal article" date="2007" name="Genome Res.">
        <title>Approaching a complete repository of sequence-verified protein-encoding clones for Saccharomyces cerevisiae.</title>
        <authorList>
            <person name="Hu Y."/>
            <person name="Rolfs A."/>
            <person name="Bhullar B."/>
            <person name="Murthy T.V.S."/>
            <person name="Zhu C."/>
            <person name="Berger M.F."/>
            <person name="Camargo A.A."/>
            <person name="Kelley F."/>
            <person name="McCarron S."/>
            <person name="Jepson D."/>
            <person name="Richardson A."/>
            <person name="Raphael J."/>
            <person name="Moreira D."/>
            <person name="Taycher E."/>
            <person name="Zuo D."/>
            <person name="Mohr S."/>
            <person name="Kane M.F."/>
            <person name="Williamson J."/>
            <person name="Simpson A.J.G."/>
            <person name="Bulyk M.L."/>
            <person name="Harlow E."/>
            <person name="Marsischky G."/>
            <person name="Kolodner R.D."/>
            <person name="LaBaer J."/>
        </authorList>
    </citation>
    <scope>NUCLEOTIDE SEQUENCE [GENOMIC DNA]</scope>
    <source>
        <strain>ATCC 204508 / S288c</strain>
    </source>
</reference>
<reference key="5">
    <citation type="journal article" date="2003" name="EMBO J.">
        <title>A novel eukaryotic factor for cytosolic Fe-S cluster assembly.</title>
        <authorList>
            <person name="Roy A."/>
            <person name="Solodovnikova N."/>
            <person name="Nicholson T."/>
            <person name="Antholine W."/>
            <person name="Walden W.E."/>
        </authorList>
    </citation>
    <scope>FUNCTION</scope>
    <scope>SUBCELLULAR LOCATION</scope>
    <scope>DISRUPTION PHENOTYPE</scope>
</reference>
<reference key="6">
    <citation type="journal article" date="2005" name="EMBO J.">
        <title>Functional link between ribosome formation and biogenesis of iron-sulfur proteins.</title>
        <authorList>
            <person name="Yarunin A."/>
            <person name="Panse V.G."/>
            <person name="Petfalski E."/>
            <person name="Dez C."/>
            <person name="Tollervey D."/>
            <person name="Hurt E.C."/>
        </authorList>
    </citation>
    <scope>FUNCTION</scope>
</reference>
<reference key="7">
    <citation type="journal article" date="2007" name="J. Proteome Res.">
        <title>Large-scale phosphorylation analysis of alpha-factor-arrested Saccharomyces cerevisiae.</title>
        <authorList>
            <person name="Li X."/>
            <person name="Gerber S.A."/>
            <person name="Rudner A.D."/>
            <person name="Beausoleil S.A."/>
            <person name="Haas W."/>
            <person name="Villen J."/>
            <person name="Elias J.E."/>
            <person name="Gygi S.P."/>
        </authorList>
    </citation>
    <scope>PHOSPHORYLATION [LARGE SCALE ANALYSIS] AT SER-291</scope>
    <scope>IDENTIFICATION BY MASS SPECTROMETRY [LARGE SCALE ANALYSIS]</scope>
    <source>
        <strain>ADR376</strain>
    </source>
</reference>
<reference key="8">
    <citation type="journal article" date="2007" name="Nat. Chem. Biol.">
        <title>The Cfd1-Nbp35 complex acts as a scaffold for iron-sulfur protein assembly in the yeast cytosol.</title>
        <authorList>
            <person name="Netz D.J.A."/>
            <person name="Pierik A.J."/>
            <person name="Stuempfig M."/>
            <person name="Muehlenhoff U."/>
            <person name="Lill R."/>
        </authorList>
    </citation>
    <scope>FUNCTION</scope>
    <scope>INTERACTION WITH NBP35</scope>
    <scope>EPR SPECTROSCOPY OF IRON-SULFUR CLUSTER</scope>
</reference>
<reference key="9">
    <citation type="journal article" date="2009" name="Science">
        <title>Global analysis of Cdk1 substrate phosphorylation sites provides insights into evolution.</title>
        <authorList>
            <person name="Holt L.J."/>
            <person name="Tuch B.B."/>
            <person name="Villen J."/>
            <person name="Johnson A.D."/>
            <person name="Gygi S.P."/>
            <person name="Morgan D.O."/>
        </authorList>
    </citation>
    <scope>PHOSPHORYLATION [LARGE SCALE ANALYSIS] AT SER-291</scope>
    <scope>IDENTIFICATION BY MASS SPECTROMETRY [LARGE SCALE ANALYSIS]</scope>
</reference>
<reference key="10">
    <citation type="journal article" date="2012" name="J. Biol. Chem.">
        <title>A bridging [4Fe-4S] cluster and nucleotide binding are essential for function of the Cfd1-Nbp35 complex as a scaffold in iron-sulfur protein maturation.</title>
        <authorList>
            <person name="Netz D.J."/>
            <person name="Pierik A.J."/>
            <person name="Stumpfig M."/>
            <person name="Bill E."/>
            <person name="Sharma A.K."/>
            <person name="Pallesen L.J."/>
            <person name="Walden W.E."/>
            <person name="Lill R."/>
        </authorList>
    </citation>
    <scope>FUNCTION</scope>
    <scope>SUBUNIT</scope>
    <scope>MUTAGENESIS OF CYS-182; CYS-201; CYS-204 AND CYS-207</scope>
</reference>
<reference key="11">
    <citation type="journal article" date="2019" name="J. Biol. Chem.">
        <title>Mitochondria export iron-sulfur and sulfur intermediates to the cytoplasm for iron-sulfur cluster assembly and tRNA thiolation in yeast.</title>
        <authorList>
            <person name="Pandey A.K."/>
            <person name="Pain J."/>
            <person name="Dancis A."/>
            <person name="Pain D."/>
        </authorList>
    </citation>
    <scope>FUNCTION</scope>
    <scope>DISRUPTION PHENOTYPE</scope>
</reference>